<feature type="chain" id="PRO_0000243009" description="Large ribosomal subunit protein uL5">
    <location>
        <begin position="1"/>
        <end position="179"/>
    </location>
</feature>
<keyword id="KW-1185">Reference proteome</keyword>
<keyword id="KW-0687">Ribonucleoprotein</keyword>
<keyword id="KW-0689">Ribosomal protein</keyword>
<keyword id="KW-0694">RNA-binding</keyword>
<keyword id="KW-0699">rRNA-binding</keyword>
<keyword id="KW-0820">tRNA-binding</keyword>
<accession>Q5QXX0</accession>
<name>RL5_IDILO</name>
<comment type="function">
    <text evidence="1">This is one of the proteins that bind and probably mediate the attachment of the 5S RNA into the large ribosomal subunit, where it forms part of the central protuberance. In the 70S ribosome it contacts protein S13 of the 30S subunit (bridge B1b), connecting the 2 subunits; this bridge is implicated in subunit movement. Contacts the P site tRNA; the 5S rRNA and some of its associated proteins might help stabilize positioning of ribosome-bound tRNAs.</text>
</comment>
<comment type="subunit">
    <text evidence="1">Part of the 50S ribosomal subunit; part of the 5S rRNA/L5/L18/L25 subcomplex. Contacts the 5S rRNA and the P site tRNA. Forms a bridge to the 30S subunit in the 70S ribosome.</text>
</comment>
<comment type="similarity">
    <text evidence="1">Belongs to the universal ribosomal protein uL5 family.</text>
</comment>
<proteinExistence type="inferred from homology"/>
<evidence type="ECO:0000255" key="1">
    <source>
        <dbReference type="HAMAP-Rule" id="MF_01333"/>
    </source>
</evidence>
<evidence type="ECO:0000305" key="2"/>
<gene>
    <name evidence="1" type="primary">rplE</name>
    <name type="ordered locus">IL1904</name>
</gene>
<reference key="1">
    <citation type="journal article" date="2004" name="Proc. Natl. Acad. Sci. U.S.A.">
        <title>Genome sequence of the deep-sea gamma-proteobacterium Idiomarina loihiensis reveals amino acid fermentation as a source of carbon and energy.</title>
        <authorList>
            <person name="Hou S."/>
            <person name="Saw J.H."/>
            <person name="Lee K.S."/>
            <person name="Freitas T.A."/>
            <person name="Belisle C."/>
            <person name="Kawarabayasi Y."/>
            <person name="Donachie S.P."/>
            <person name="Pikina A."/>
            <person name="Galperin M.Y."/>
            <person name="Koonin E.V."/>
            <person name="Makarova K.S."/>
            <person name="Omelchenko M.V."/>
            <person name="Sorokin A."/>
            <person name="Wolf Y.I."/>
            <person name="Li Q.X."/>
            <person name="Keum Y.S."/>
            <person name="Campbell S."/>
            <person name="Denery J."/>
            <person name="Aizawa S."/>
            <person name="Shibata S."/>
            <person name="Malahoff A."/>
            <person name="Alam M."/>
        </authorList>
    </citation>
    <scope>NUCLEOTIDE SEQUENCE [LARGE SCALE GENOMIC DNA]</scope>
    <source>
        <strain>ATCC BAA-735 / DSM 15497 / L2-TR</strain>
    </source>
</reference>
<dbReference type="EMBL" id="AE017340">
    <property type="protein sequence ID" value="AAV82736.1"/>
    <property type="molecule type" value="Genomic_DNA"/>
</dbReference>
<dbReference type="RefSeq" id="WP_011235135.1">
    <property type="nucleotide sequence ID" value="NC_006512.1"/>
</dbReference>
<dbReference type="SMR" id="Q5QXX0"/>
<dbReference type="STRING" id="283942.IL1904"/>
<dbReference type="GeneID" id="41337092"/>
<dbReference type="KEGG" id="ilo:IL1904"/>
<dbReference type="eggNOG" id="COG0094">
    <property type="taxonomic scope" value="Bacteria"/>
</dbReference>
<dbReference type="HOGENOM" id="CLU_061015_2_1_6"/>
<dbReference type="OrthoDB" id="9806626at2"/>
<dbReference type="Proteomes" id="UP000001171">
    <property type="component" value="Chromosome"/>
</dbReference>
<dbReference type="GO" id="GO:1990904">
    <property type="term" value="C:ribonucleoprotein complex"/>
    <property type="evidence" value="ECO:0007669"/>
    <property type="project" value="UniProtKB-KW"/>
</dbReference>
<dbReference type="GO" id="GO:0005840">
    <property type="term" value="C:ribosome"/>
    <property type="evidence" value="ECO:0007669"/>
    <property type="project" value="UniProtKB-KW"/>
</dbReference>
<dbReference type="GO" id="GO:0019843">
    <property type="term" value="F:rRNA binding"/>
    <property type="evidence" value="ECO:0007669"/>
    <property type="project" value="UniProtKB-UniRule"/>
</dbReference>
<dbReference type="GO" id="GO:0003735">
    <property type="term" value="F:structural constituent of ribosome"/>
    <property type="evidence" value="ECO:0007669"/>
    <property type="project" value="InterPro"/>
</dbReference>
<dbReference type="GO" id="GO:0000049">
    <property type="term" value="F:tRNA binding"/>
    <property type="evidence" value="ECO:0007669"/>
    <property type="project" value="UniProtKB-UniRule"/>
</dbReference>
<dbReference type="GO" id="GO:0006412">
    <property type="term" value="P:translation"/>
    <property type="evidence" value="ECO:0007669"/>
    <property type="project" value="UniProtKB-UniRule"/>
</dbReference>
<dbReference type="FunFam" id="3.30.1440.10:FF:000001">
    <property type="entry name" value="50S ribosomal protein L5"/>
    <property type="match status" value="1"/>
</dbReference>
<dbReference type="Gene3D" id="3.30.1440.10">
    <property type="match status" value="1"/>
</dbReference>
<dbReference type="HAMAP" id="MF_01333_B">
    <property type="entry name" value="Ribosomal_uL5_B"/>
    <property type="match status" value="1"/>
</dbReference>
<dbReference type="InterPro" id="IPR002132">
    <property type="entry name" value="Ribosomal_uL5"/>
</dbReference>
<dbReference type="InterPro" id="IPR020930">
    <property type="entry name" value="Ribosomal_uL5_bac-type"/>
</dbReference>
<dbReference type="InterPro" id="IPR031309">
    <property type="entry name" value="Ribosomal_uL5_C"/>
</dbReference>
<dbReference type="InterPro" id="IPR020929">
    <property type="entry name" value="Ribosomal_uL5_CS"/>
</dbReference>
<dbReference type="InterPro" id="IPR022803">
    <property type="entry name" value="Ribosomal_uL5_dom_sf"/>
</dbReference>
<dbReference type="InterPro" id="IPR031310">
    <property type="entry name" value="Ribosomal_uL5_N"/>
</dbReference>
<dbReference type="NCBIfam" id="NF000585">
    <property type="entry name" value="PRK00010.1"/>
    <property type="match status" value="1"/>
</dbReference>
<dbReference type="PANTHER" id="PTHR11994">
    <property type="entry name" value="60S RIBOSOMAL PROTEIN L11-RELATED"/>
    <property type="match status" value="1"/>
</dbReference>
<dbReference type="Pfam" id="PF00281">
    <property type="entry name" value="Ribosomal_L5"/>
    <property type="match status" value="1"/>
</dbReference>
<dbReference type="Pfam" id="PF00673">
    <property type="entry name" value="Ribosomal_L5_C"/>
    <property type="match status" value="1"/>
</dbReference>
<dbReference type="PIRSF" id="PIRSF002161">
    <property type="entry name" value="Ribosomal_L5"/>
    <property type="match status" value="1"/>
</dbReference>
<dbReference type="SUPFAM" id="SSF55282">
    <property type="entry name" value="RL5-like"/>
    <property type="match status" value="1"/>
</dbReference>
<dbReference type="PROSITE" id="PS00358">
    <property type="entry name" value="RIBOSOMAL_L5"/>
    <property type="match status" value="1"/>
</dbReference>
<organism>
    <name type="scientific">Idiomarina loihiensis (strain ATCC BAA-735 / DSM 15497 / L2-TR)</name>
    <dbReference type="NCBI Taxonomy" id="283942"/>
    <lineage>
        <taxon>Bacteria</taxon>
        <taxon>Pseudomonadati</taxon>
        <taxon>Pseudomonadota</taxon>
        <taxon>Gammaproteobacteria</taxon>
        <taxon>Alteromonadales</taxon>
        <taxon>Idiomarinaceae</taxon>
        <taxon>Idiomarina</taxon>
    </lineage>
</organism>
<sequence length="179" mass="20229">MAKLHDFYRESVVPELMKEFSYNSVMQVPRIDKITLNMGVGEALADKKVLDNAVADLEAISGQKPIRTVARKSVAGFKVREGFPIGCKVTLRGERMWDFLQRLISIAIPRIRDFRGLNPKSFDGRGNYSMGVREQIIFPEVDYDKVDKVRGLDITITTNAGTDDEARALLAAFNFPFRK</sequence>
<protein>
    <recommendedName>
        <fullName evidence="1">Large ribosomal subunit protein uL5</fullName>
    </recommendedName>
    <alternativeName>
        <fullName evidence="2">50S ribosomal protein L5</fullName>
    </alternativeName>
</protein>